<comment type="function">
    <text evidence="1">Sequence-specific transcription factor which is part of a developmental regulatory system that provides cells with specific positional identities on the anterior-posterior axis. Binds the consensus region 5'-TTAAT[GT][GA]-3'. This homeotic protein controls development of the cells in the posterior thoracic and first abdominal segments. It activates the synthesis of the decapentaplegic (DPP) growth factor (By similarity).</text>
</comment>
<comment type="subcellular location">
    <subcellularLocation>
        <location>Nucleus</location>
    </subcellularLocation>
</comment>
<comment type="similarity">
    <text evidence="3">Belongs to the Antp homeobox family.</text>
</comment>
<evidence type="ECO:0000250" key="1"/>
<evidence type="ECO:0000256" key="2">
    <source>
        <dbReference type="SAM" id="MobiDB-lite"/>
    </source>
</evidence>
<evidence type="ECO:0000305" key="3"/>
<keyword id="KW-0010">Activator</keyword>
<keyword id="KW-0217">Developmental protein</keyword>
<keyword id="KW-0238">DNA-binding</keyword>
<keyword id="KW-0371">Homeobox</keyword>
<keyword id="KW-0539">Nucleus</keyword>
<keyword id="KW-0804">Transcription</keyword>
<keyword id="KW-0805">Transcription regulation</keyword>
<protein>
    <recommendedName>
        <fullName>Homeotic protein ultrabithorax</fullName>
    </recommendedName>
</protein>
<name>UBX_DROFU</name>
<feature type="chain" id="PRO_0000200266" description="Homeotic protein ultrabithorax">
    <location>
        <begin position="1"/>
        <end position="253" status="greater than"/>
    </location>
</feature>
<feature type="region of interest" description="Disordered" evidence="2">
    <location>
        <begin position="125"/>
        <end position="193"/>
    </location>
</feature>
<feature type="short sequence motif" description="Antp-type hexapeptide">
    <location>
        <begin position="237"/>
        <end position="242"/>
    </location>
</feature>
<feature type="compositionally biased region" description="Low complexity" evidence="2">
    <location>
        <begin position="125"/>
        <end position="141"/>
    </location>
</feature>
<feature type="compositionally biased region" description="Gly residues" evidence="2">
    <location>
        <begin position="176"/>
        <end position="189"/>
    </location>
</feature>
<feature type="non-terminal residue">
    <location>
        <position position="253"/>
    </location>
</feature>
<reference key="1">
    <citation type="journal article" date="1987" name="EMBO J.">
        <title>Conserved sequence elements in the 5' region of the Ultrabithorax transcription unit.</title>
        <authorList>
            <person name="Wilde C.D."/>
            <person name="Akam M."/>
        </authorList>
    </citation>
    <scope>NUCLEOTIDE SEQUENCE [GENOMIC DNA]</scope>
</reference>
<gene>
    <name type="primary">Ubx</name>
</gene>
<organism>
    <name type="scientific">Drosophila funebris</name>
    <name type="common">Fruit fly</name>
    <dbReference type="NCBI Taxonomy" id="7221"/>
    <lineage>
        <taxon>Eukaryota</taxon>
        <taxon>Metazoa</taxon>
        <taxon>Ecdysozoa</taxon>
        <taxon>Arthropoda</taxon>
        <taxon>Hexapoda</taxon>
        <taxon>Insecta</taxon>
        <taxon>Pterygota</taxon>
        <taxon>Neoptera</taxon>
        <taxon>Endopterygota</taxon>
        <taxon>Diptera</taxon>
        <taxon>Brachycera</taxon>
        <taxon>Muscomorpha</taxon>
        <taxon>Ephydroidea</taxon>
        <taxon>Drosophilidae</taxon>
        <taxon>Drosophila</taxon>
    </lineage>
</organism>
<dbReference type="EMBL" id="X05177">
    <property type="protein sequence ID" value="CAA28811.1"/>
    <property type="molecule type" value="Genomic_DNA"/>
</dbReference>
<dbReference type="EMBL" id="X05177">
    <property type="protein sequence ID" value="CAA28812.1"/>
    <property type="status" value="ALT_TERM"/>
    <property type="molecule type" value="Genomic_DNA"/>
</dbReference>
<dbReference type="PIR" id="A33144">
    <property type="entry name" value="A33144"/>
</dbReference>
<dbReference type="GO" id="GO:0005634">
    <property type="term" value="C:nucleus"/>
    <property type="evidence" value="ECO:0007669"/>
    <property type="project" value="UniProtKB-SubCell"/>
</dbReference>
<dbReference type="GO" id="GO:0003677">
    <property type="term" value="F:DNA binding"/>
    <property type="evidence" value="ECO:0000304"/>
    <property type="project" value="UniProtKB"/>
</dbReference>
<dbReference type="PROSITE" id="PS00032">
    <property type="entry name" value="ANTENNAPEDIA"/>
    <property type="match status" value="1"/>
</dbReference>
<sequence>MNSYFEQASGFYGHPHQASGMAMGSGGHHDQTTASAAAAAYRGFTLPLGMSPYANHHLQRTTQDSPYDASITAACNKIYGDAGSAYKQDCLNIKADAVNGYKDIWNTGGANGGGGGGGGGAATAGNTSNGSNAPNAANGQNNAGGGGMPVRPSACTPDSRVGGYLDTSGGSPVSHRGGGSAGGGNGTAGGVPQNSASGVGGGVGAGTAWNANCTISGAAAAQTAAASSLHQPGNHTFYPWMAIAGESTADPIK</sequence>
<proteinExistence type="inferred from homology"/>
<accession>P05048</accession>